<feature type="chain" id="PRO_0000109213" description="UDP-N-acetylglucosamine--N-acetylmuramyl-(pentapeptide) pyrophosphoryl-undecaprenol N-acetylglucosamine transferase">
    <location>
        <begin position="1"/>
        <end position="356"/>
    </location>
</feature>
<feature type="binding site" evidence="1">
    <location>
        <position position="166"/>
    </location>
    <ligand>
        <name>UDP-N-acetyl-alpha-D-glucosamine</name>
        <dbReference type="ChEBI" id="CHEBI:57705"/>
    </ligand>
</feature>
<feature type="binding site" evidence="1">
    <location>
        <position position="196"/>
    </location>
    <ligand>
        <name>UDP-N-acetyl-alpha-D-glucosamine</name>
        <dbReference type="ChEBI" id="CHEBI:57705"/>
    </ligand>
</feature>
<feature type="binding site" evidence="1">
    <location>
        <position position="290"/>
    </location>
    <ligand>
        <name>UDP-N-acetyl-alpha-D-glucosamine</name>
        <dbReference type="ChEBI" id="CHEBI:57705"/>
    </ligand>
</feature>
<dbReference type="EC" id="2.4.1.227" evidence="1"/>
<dbReference type="EMBL" id="BX571856">
    <property type="protein sequence ID" value="CAG40427.1"/>
    <property type="molecule type" value="Genomic_DNA"/>
</dbReference>
<dbReference type="RefSeq" id="WP_000160914.1">
    <property type="nucleotide sequence ID" value="NC_002952.2"/>
</dbReference>
<dbReference type="SMR" id="Q6GGZ0"/>
<dbReference type="CAZy" id="GT28">
    <property type="family name" value="Glycosyltransferase Family 28"/>
</dbReference>
<dbReference type="KEGG" id="sar:SAR1430"/>
<dbReference type="HOGENOM" id="CLU_037404_0_0_9"/>
<dbReference type="UniPathway" id="UPA00219"/>
<dbReference type="Proteomes" id="UP000000596">
    <property type="component" value="Chromosome"/>
</dbReference>
<dbReference type="GO" id="GO:0005886">
    <property type="term" value="C:plasma membrane"/>
    <property type="evidence" value="ECO:0007669"/>
    <property type="project" value="UniProtKB-SubCell"/>
</dbReference>
<dbReference type="GO" id="GO:0050511">
    <property type="term" value="F:undecaprenyldiphospho-muramoylpentapeptide beta-N-acetylglucosaminyltransferase activity"/>
    <property type="evidence" value="ECO:0007669"/>
    <property type="project" value="UniProtKB-UniRule"/>
</dbReference>
<dbReference type="GO" id="GO:0005975">
    <property type="term" value="P:carbohydrate metabolic process"/>
    <property type="evidence" value="ECO:0007669"/>
    <property type="project" value="InterPro"/>
</dbReference>
<dbReference type="GO" id="GO:0051301">
    <property type="term" value="P:cell division"/>
    <property type="evidence" value="ECO:0007669"/>
    <property type="project" value="UniProtKB-KW"/>
</dbReference>
<dbReference type="GO" id="GO:0071555">
    <property type="term" value="P:cell wall organization"/>
    <property type="evidence" value="ECO:0007669"/>
    <property type="project" value="UniProtKB-KW"/>
</dbReference>
<dbReference type="GO" id="GO:0030259">
    <property type="term" value="P:lipid glycosylation"/>
    <property type="evidence" value="ECO:0007669"/>
    <property type="project" value="UniProtKB-UniRule"/>
</dbReference>
<dbReference type="GO" id="GO:0009252">
    <property type="term" value="P:peptidoglycan biosynthetic process"/>
    <property type="evidence" value="ECO:0007669"/>
    <property type="project" value="UniProtKB-UniRule"/>
</dbReference>
<dbReference type="GO" id="GO:0008360">
    <property type="term" value="P:regulation of cell shape"/>
    <property type="evidence" value="ECO:0007669"/>
    <property type="project" value="UniProtKB-KW"/>
</dbReference>
<dbReference type="CDD" id="cd03785">
    <property type="entry name" value="GT28_MurG"/>
    <property type="match status" value="1"/>
</dbReference>
<dbReference type="Gene3D" id="3.40.50.2000">
    <property type="entry name" value="Glycogen Phosphorylase B"/>
    <property type="match status" value="2"/>
</dbReference>
<dbReference type="HAMAP" id="MF_00033">
    <property type="entry name" value="MurG"/>
    <property type="match status" value="1"/>
</dbReference>
<dbReference type="InterPro" id="IPR006009">
    <property type="entry name" value="GlcNAc_MurG"/>
</dbReference>
<dbReference type="InterPro" id="IPR007235">
    <property type="entry name" value="Glyco_trans_28_C"/>
</dbReference>
<dbReference type="InterPro" id="IPR004276">
    <property type="entry name" value="GlycoTrans_28_N"/>
</dbReference>
<dbReference type="NCBIfam" id="NF009102">
    <property type="entry name" value="PRK12446.1"/>
    <property type="match status" value="1"/>
</dbReference>
<dbReference type="PANTHER" id="PTHR21015:SF27">
    <property type="entry name" value="UDP-N-ACETYLGLUCOSAMINE--N-ACETYLMURAMYL-(PENTAPEPTIDE) PYROPHOSPHORYL-UNDECAPRENOL N-ACETYLGLUCOSAMINE TRANSFERASE"/>
    <property type="match status" value="1"/>
</dbReference>
<dbReference type="PANTHER" id="PTHR21015">
    <property type="entry name" value="UDP-N-ACETYLGLUCOSAMINE--N-ACETYLMURAMYL-(PENTAPEPTIDE) PYROPHOSPHORYL-UNDECAPRENOL N-ACETYLGLUCOSAMINE TRANSFERASE 1"/>
    <property type="match status" value="1"/>
</dbReference>
<dbReference type="Pfam" id="PF04101">
    <property type="entry name" value="Glyco_tran_28_C"/>
    <property type="match status" value="1"/>
</dbReference>
<dbReference type="Pfam" id="PF03033">
    <property type="entry name" value="Glyco_transf_28"/>
    <property type="match status" value="1"/>
</dbReference>
<dbReference type="SUPFAM" id="SSF53756">
    <property type="entry name" value="UDP-Glycosyltransferase/glycogen phosphorylase"/>
    <property type="match status" value="1"/>
</dbReference>
<comment type="function">
    <text evidence="1">Cell wall formation. Catalyzes the transfer of a GlcNAc subunit on undecaprenyl-pyrophosphoryl-MurNAc-pentapeptide (lipid intermediate I) to form undecaprenyl-pyrophosphoryl-MurNAc-(pentapeptide)GlcNAc (lipid intermediate II).</text>
</comment>
<comment type="catalytic activity">
    <reaction evidence="1">
        <text>Mur2Ac(oyl-L-Ala-gamma-D-Glu-L-Lys-D-Ala-D-Ala)-di-trans,octa-cis-undecaprenyl diphosphate + UDP-N-acetyl-alpha-D-glucosamine = beta-D-GlcNAc-(1-&gt;4)-Mur2Ac(oyl-L-Ala-gamma-D-Glu-L-Lys-D-Ala-D-Ala)-di-trans,octa-cis-undecaprenyl diphosphate + UDP + H(+)</text>
        <dbReference type="Rhea" id="RHEA:23192"/>
        <dbReference type="ChEBI" id="CHEBI:15378"/>
        <dbReference type="ChEBI" id="CHEBI:57705"/>
        <dbReference type="ChEBI" id="CHEBI:58223"/>
        <dbReference type="ChEBI" id="CHEBI:60032"/>
        <dbReference type="ChEBI" id="CHEBI:60033"/>
        <dbReference type="EC" id="2.4.1.227"/>
    </reaction>
</comment>
<comment type="pathway">
    <text evidence="1">Cell wall biogenesis; peptidoglycan biosynthesis.</text>
</comment>
<comment type="subcellular location">
    <subcellularLocation>
        <location evidence="1">Cell membrane</location>
        <topology evidence="1">Peripheral membrane protein</topology>
        <orientation evidence="1">Cytoplasmic side</orientation>
    </subcellularLocation>
</comment>
<comment type="similarity">
    <text evidence="1">Belongs to the glycosyltransferase 28 family. MurG subfamily.</text>
</comment>
<accession>Q6GGZ0</accession>
<evidence type="ECO:0000255" key="1">
    <source>
        <dbReference type="HAMAP-Rule" id="MF_00033"/>
    </source>
</evidence>
<sequence length="356" mass="39754">MTKIAFTGGGTVGHVSVNLSLIPTALSQGYEVLYIGSKNGIEREMIESQLPEIKYYPISSGKLRRYISLENAKDVFKVLKGILDARKVLKKEKPDLLFSKGGFVSVPVVIAAKSLNIPTIIHESDLTPGLANKIALKFAKKIYTTFEETLNYLPKEKADFIGATIREDLKNGNAHNGYQLTGFNENKKVLLVMGGSLGSKKLNSIIRENLDALLQQYQVIHLTGKGLKDAQVKKSGYIQYEFVKEDLTDLLAITDTVISRAGSNAIYEFLTLRIPMLLVPLGLDQSRGDQIDNANHFADKGYAKTIDEEQLTAQILLQELNKMEQERTRIINNMKSYEQSYTKEALFDKMIKDALN</sequence>
<protein>
    <recommendedName>
        <fullName evidence="1">UDP-N-acetylglucosamine--N-acetylmuramyl-(pentapeptide) pyrophosphoryl-undecaprenol N-acetylglucosamine transferase</fullName>
        <ecNumber evidence="1">2.4.1.227</ecNumber>
    </recommendedName>
    <alternativeName>
        <fullName evidence="1">Undecaprenyl-PP-MurNAc-pentapeptide-UDPGlcNAc GlcNAc transferase</fullName>
    </alternativeName>
</protein>
<keyword id="KW-0131">Cell cycle</keyword>
<keyword id="KW-0132">Cell division</keyword>
<keyword id="KW-1003">Cell membrane</keyword>
<keyword id="KW-0133">Cell shape</keyword>
<keyword id="KW-0961">Cell wall biogenesis/degradation</keyword>
<keyword id="KW-0328">Glycosyltransferase</keyword>
<keyword id="KW-0472">Membrane</keyword>
<keyword id="KW-0573">Peptidoglycan synthesis</keyword>
<keyword id="KW-0808">Transferase</keyword>
<gene>
    <name evidence="1" type="primary">murG</name>
    <name type="ordered locus">SAR1430</name>
</gene>
<name>MURG_STAAR</name>
<organism>
    <name type="scientific">Staphylococcus aureus (strain MRSA252)</name>
    <dbReference type="NCBI Taxonomy" id="282458"/>
    <lineage>
        <taxon>Bacteria</taxon>
        <taxon>Bacillati</taxon>
        <taxon>Bacillota</taxon>
        <taxon>Bacilli</taxon>
        <taxon>Bacillales</taxon>
        <taxon>Staphylococcaceae</taxon>
        <taxon>Staphylococcus</taxon>
    </lineage>
</organism>
<proteinExistence type="inferred from homology"/>
<reference key="1">
    <citation type="journal article" date="2004" name="Proc. Natl. Acad. Sci. U.S.A.">
        <title>Complete genomes of two clinical Staphylococcus aureus strains: evidence for the rapid evolution of virulence and drug resistance.</title>
        <authorList>
            <person name="Holden M.T.G."/>
            <person name="Feil E.J."/>
            <person name="Lindsay J.A."/>
            <person name="Peacock S.J."/>
            <person name="Day N.P.J."/>
            <person name="Enright M.C."/>
            <person name="Foster T.J."/>
            <person name="Moore C.E."/>
            <person name="Hurst L."/>
            <person name="Atkin R."/>
            <person name="Barron A."/>
            <person name="Bason N."/>
            <person name="Bentley S.D."/>
            <person name="Chillingworth C."/>
            <person name="Chillingworth T."/>
            <person name="Churcher C."/>
            <person name="Clark L."/>
            <person name="Corton C."/>
            <person name="Cronin A."/>
            <person name="Doggett J."/>
            <person name="Dowd L."/>
            <person name="Feltwell T."/>
            <person name="Hance Z."/>
            <person name="Harris B."/>
            <person name="Hauser H."/>
            <person name="Holroyd S."/>
            <person name="Jagels K."/>
            <person name="James K.D."/>
            <person name="Lennard N."/>
            <person name="Line A."/>
            <person name="Mayes R."/>
            <person name="Moule S."/>
            <person name="Mungall K."/>
            <person name="Ormond D."/>
            <person name="Quail M.A."/>
            <person name="Rabbinowitsch E."/>
            <person name="Rutherford K.M."/>
            <person name="Sanders M."/>
            <person name="Sharp S."/>
            <person name="Simmonds M."/>
            <person name="Stevens K."/>
            <person name="Whitehead S."/>
            <person name="Barrell B.G."/>
            <person name="Spratt B.G."/>
            <person name="Parkhill J."/>
        </authorList>
    </citation>
    <scope>NUCLEOTIDE SEQUENCE [LARGE SCALE GENOMIC DNA]</scope>
    <source>
        <strain>MRSA252</strain>
    </source>
</reference>